<reference key="1">
    <citation type="journal article" date="1997" name="Nature">
        <title>The nucleotide sequence of Saccharomyces cerevisiae chromosome XVI.</title>
        <authorList>
            <person name="Bussey H."/>
            <person name="Storms R.K."/>
            <person name="Ahmed A."/>
            <person name="Albermann K."/>
            <person name="Allen E."/>
            <person name="Ansorge W."/>
            <person name="Araujo R."/>
            <person name="Aparicio A."/>
            <person name="Barrell B.G."/>
            <person name="Badcock K."/>
            <person name="Benes V."/>
            <person name="Botstein D."/>
            <person name="Bowman S."/>
            <person name="Brueckner M."/>
            <person name="Carpenter J."/>
            <person name="Cherry J.M."/>
            <person name="Chung E."/>
            <person name="Churcher C.M."/>
            <person name="Coster F."/>
            <person name="Davis K."/>
            <person name="Davis R.W."/>
            <person name="Dietrich F.S."/>
            <person name="Delius H."/>
            <person name="DiPaolo T."/>
            <person name="Dubois E."/>
            <person name="Duesterhoeft A."/>
            <person name="Duncan M."/>
            <person name="Floeth M."/>
            <person name="Fortin N."/>
            <person name="Friesen J.D."/>
            <person name="Fritz C."/>
            <person name="Goffeau A."/>
            <person name="Hall J."/>
            <person name="Hebling U."/>
            <person name="Heumann K."/>
            <person name="Hilbert H."/>
            <person name="Hillier L.W."/>
            <person name="Hunicke-Smith S."/>
            <person name="Hyman R.W."/>
            <person name="Johnston M."/>
            <person name="Kalman S."/>
            <person name="Kleine K."/>
            <person name="Komp C."/>
            <person name="Kurdi O."/>
            <person name="Lashkari D."/>
            <person name="Lew H."/>
            <person name="Lin A."/>
            <person name="Lin D."/>
            <person name="Louis E.J."/>
            <person name="Marathe R."/>
            <person name="Messenguy F."/>
            <person name="Mewes H.-W."/>
            <person name="Mirtipati S."/>
            <person name="Moestl D."/>
            <person name="Mueller-Auer S."/>
            <person name="Namath A."/>
            <person name="Nentwich U."/>
            <person name="Oefner P."/>
            <person name="Pearson D."/>
            <person name="Petel F.X."/>
            <person name="Pohl T.M."/>
            <person name="Purnelle B."/>
            <person name="Rajandream M.A."/>
            <person name="Rechmann S."/>
            <person name="Rieger M."/>
            <person name="Riles L."/>
            <person name="Roberts D."/>
            <person name="Schaefer M."/>
            <person name="Scharfe M."/>
            <person name="Scherens B."/>
            <person name="Schramm S."/>
            <person name="Schroeder M."/>
            <person name="Sdicu A.-M."/>
            <person name="Tettelin H."/>
            <person name="Urrestarazu L.A."/>
            <person name="Ushinsky S."/>
            <person name="Vierendeels F."/>
            <person name="Vissers S."/>
            <person name="Voss H."/>
            <person name="Walsh S.V."/>
            <person name="Wambutt R."/>
            <person name="Wang Y."/>
            <person name="Wedler E."/>
            <person name="Wedler H."/>
            <person name="Winnett E."/>
            <person name="Zhong W.-W."/>
            <person name="Zollner A."/>
            <person name="Vo D.H."/>
            <person name="Hani J."/>
        </authorList>
    </citation>
    <scope>NUCLEOTIDE SEQUENCE [LARGE SCALE GENOMIC DNA]</scope>
    <source>
        <strain>ATCC 204508 / S288c</strain>
    </source>
</reference>
<reference key="2">
    <citation type="journal article" date="2014" name="G3 (Bethesda)">
        <title>The reference genome sequence of Saccharomyces cerevisiae: Then and now.</title>
        <authorList>
            <person name="Engel S.R."/>
            <person name="Dietrich F.S."/>
            <person name="Fisk D.G."/>
            <person name="Binkley G."/>
            <person name="Balakrishnan R."/>
            <person name="Costanzo M.C."/>
            <person name="Dwight S.S."/>
            <person name="Hitz B.C."/>
            <person name="Karra K."/>
            <person name="Nash R.S."/>
            <person name="Weng S."/>
            <person name="Wong E.D."/>
            <person name="Lloyd P."/>
            <person name="Skrzypek M.S."/>
            <person name="Miyasato S.R."/>
            <person name="Simison M."/>
            <person name="Cherry J.M."/>
        </authorList>
    </citation>
    <scope>GENOME REANNOTATION</scope>
    <source>
        <strain>ATCC 204508 / S288c</strain>
    </source>
</reference>
<reference key="3">
    <citation type="submission" date="2005-06" db="UniProtKB">
        <authorList>
            <person name="Bienvenut W.V."/>
            <person name="Peters C."/>
        </authorList>
    </citation>
    <scope>PROTEIN SEQUENCE OF 7-16; 28-62; 101-112; 149-175; 194-221; 227-252; 265-284; 330-340; 342-358; 363-386; 398-419; 425-447; 466-477; 481-495 AND 808-835</scope>
    <scope>IDENTIFICATION BY MASS SPECTROMETRY</scope>
</reference>
<reference key="4">
    <citation type="journal article" date="1999" name="J. Biol. Chem.">
        <title>A novel family of yeast chaperons involved in the distribution of V-ATPase and other membrane proteins.</title>
        <authorList>
            <person name="Cohen A."/>
            <person name="Perzov N."/>
            <person name="Nelson H."/>
            <person name="Nelson N."/>
        </authorList>
    </citation>
    <scope>GENE FAMILY</scope>
</reference>
<reference key="5">
    <citation type="journal article" date="2000" name="Mol. Biol. Cell">
        <title>New components of a system for phosphate accumulation and polyphosphate metabolism in Saccharomyces cerevisiae revealed by genomic expression analysis.</title>
        <authorList>
            <person name="Ogawa N."/>
            <person name="DeRisi J.L."/>
            <person name="Brown P.O."/>
        </authorList>
    </citation>
    <scope>INDUCTION</scope>
</reference>
<reference key="6">
    <citation type="journal article" date="2002" name="EMBO J.">
        <title>The Vtc proteins in vacuole fusion: coupling NSF activity to V(0) trans-complex formation.</title>
        <authorList>
            <person name="Mueller O."/>
            <person name="Bayer M.J."/>
            <person name="Peters C."/>
            <person name="Andersen J.S."/>
            <person name="Mann M."/>
            <person name="Mayer A."/>
        </authorList>
    </citation>
    <scope>FUNCTION</scope>
    <scope>IDENTIFICATION IN VTC COMPLEX</scope>
    <scope>SUBUNIT</scope>
    <scope>INTERACTION WITH NYV1 AND VPH1</scope>
</reference>
<reference key="7">
    <citation type="journal article" date="2003" name="J. Cell Sci.">
        <title>Role of the Vtc proteins in V-ATPase stability and membrane trafficking.</title>
        <authorList>
            <person name="Mueller O."/>
            <person name="Neumann H."/>
            <person name="Bayer M.J."/>
            <person name="Mayer A."/>
        </authorList>
    </citation>
    <scope>TOPOLOGY</scope>
    <scope>SUBCELLULAR LOCATION</scope>
</reference>
<reference key="8">
    <citation type="journal article" date="2003" name="Nature">
        <title>Global analysis of protein expression in yeast.</title>
        <authorList>
            <person name="Ghaemmaghami S."/>
            <person name="Huh W.-K."/>
            <person name="Bower K."/>
            <person name="Howson R.W."/>
            <person name="Belle A."/>
            <person name="Dephoure N."/>
            <person name="O'Shea E.K."/>
            <person name="Weissman J.S."/>
        </authorList>
    </citation>
    <scope>LEVEL OF PROTEIN EXPRESSION [LARGE SCALE ANALYSIS]</scope>
</reference>
<reference key="9">
    <citation type="journal article" date="2006" name="Proc. Natl. Acad. Sci. U.S.A.">
        <title>A global topology map of the Saccharomyces cerevisiae membrane proteome.</title>
        <authorList>
            <person name="Kim H."/>
            <person name="Melen K."/>
            <person name="Oesterberg M."/>
            <person name="von Heijne G."/>
        </authorList>
    </citation>
    <scope>TOPOLOGY [LARGE SCALE ANALYSIS]</scope>
    <source>
        <strain>ATCC 208353 / W303-1A</strain>
    </source>
</reference>
<reference key="10">
    <citation type="journal article" date="2007" name="J. Proteome Res.">
        <title>Large-scale phosphorylation analysis of alpha-factor-arrested Saccharomyces cerevisiae.</title>
        <authorList>
            <person name="Li X."/>
            <person name="Gerber S.A."/>
            <person name="Rudner A.D."/>
            <person name="Beausoleil S.A."/>
            <person name="Haas W."/>
            <person name="Villen J."/>
            <person name="Elias J.E."/>
            <person name="Gygi S.P."/>
        </authorList>
    </citation>
    <scope>PHOSPHORYLATION [LARGE SCALE ANALYSIS] AT SER-43; SER-198; SER-270; SER-592; SER-621 AND SER-622</scope>
    <scope>IDENTIFICATION BY MASS SPECTROMETRY [LARGE SCALE ANALYSIS]</scope>
    <source>
        <strain>ADR376</strain>
    </source>
</reference>
<reference key="11">
    <citation type="journal article" date="2007" name="Mol. Biol. Cell">
        <title>The vacuolar transporter chaperone (VTC) complex is required for microautophagy.</title>
        <authorList>
            <person name="Uttenweiler A."/>
            <person name="Schwarz H."/>
            <person name="Neumann H."/>
            <person name="Mayer A."/>
        </authorList>
    </citation>
    <scope>FUNCTION</scope>
    <scope>SUBCELLULAR LOCATION</scope>
</reference>
<reference key="12">
    <citation type="journal article" date="2007" name="Proc. Natl. Acad. Sci. U.S.A.">
        <title>Analysis of phosphorylation sites on proteins from Saccharomyces cerevisiae by electron transfer dissociation (ETD) mass spectrometry.</title>
        <authorList>
            <person name="Chi A."/>
            <person name="Huttenhower C."/>
            <person name="Geer L.Y."/>
            <person name="Coon J.J."/>
            <person name="Syka J.E.P."/>
            <person name="Bai D.L."/>
            <person name="Shabanowitz J."/>
            <person name="Burke D.J."/>
            <person name="Troyanskaya O.G."/>
            <person name="Hunt D.F."/>
        </authorList>
    </citation>
    <scope>PHOSPHORYLATION [LARGE SCALE ANALYSIS] AT SER-589 AND SER-592</scope>
    <scope>IDENTIFICATION BY MASS SPECTROMETRY [LARGE SCALE ANALYSIS]</scope>
</reference>
<reference key="13">
    <citation type="journal article" date="2008" name="Mol. Cell. Proteomics">
        <title>A multidimensional chromatography technology for in-depth phosphoproteome analysis.</title>
        <authorList>
            <person name="Albuquerque C.P."/>
            <person name="Smolka M.B."/>
            <person name="Payne S.H."/>
            <person name="Bafna V."/>
            <person name="Eng J."/>
            <person name="Zhou H."/>
        </authorList>
    </citation>
    <scope>PHOSPHORYLATION [LARGE SCALE ANALYSIS] AT THR-183; SER-198; SER-274; SER-621 AND SER-622</scope>
    <scope>IDENTIFICATION BY MASS SPECTROMETRY [LARGE SCALE ANALYSIS]</scope>
</reference>
<reference key="14">
    <citation type="journal article" date="2009" name="Science">
        <title>Catalytic core of a membrane-associated eukaryotic polyphosphate polymerase.</title>
        <authorList>
            <person name="Hothorn M."/>
            <person name="Neumann H."/>
            <person name="Lenherr E.D."/>
            <person name="Wehner M."/>
            <person name="Rybin V."/>
            <person name="Hassa P.O."/>
            <person name="Uttenweiler A."/>
            <person name="Reinhardt M."/>
            <person name="Schmidt A."/>
            <person name="Seiler J."/>
            <person name="Ladurner A.G."/>
            <person name="Herrmann C."/>
            <person name="Scheffzek K."/>
            <person name="Mayer A."/>
        </authorList>
    </citation>
    <scope>FUNCTION</scope>
    <scope>SUBUNIT</scope>
    <scope>SUBCELLULAR LOCATION</scope>
</reference>
<reference key="15">
    <citation type="journal article" date="2009" name="Science">
        <title>Global analysis of Cdk1 substrate phosphorylation sites provides insights into evolution.</title>
        <authorList>
            <person name="Holt L.J."/>
            <person name="Tuch B.B."/>
            <person name="Villen J."/>
            <person name="Johnson A.D."/>
            <person name="Gygi S.P."/>
            <person name="Morgan D.O."/>
        </authorList>
    </citation>
    <scope>PHOSPHORYLATION [LARGE SCALE ANALYSIS] AT SER-43; SER-45; SER-50; SER-195; SER-198; SER-270; SER-274; SER-621 AND SER-622</scope>
    <scope>IDENTIFICATION BY MASS SPECTROMETRY [LARGE SCALE ANALYSIS]</scope>
</reference>
<reference key="16">
    <citation type="journal article" date="2014" name="J. Cell Sci.">
        <title>Coupled synthesis and translocation restrains polyphosphate to acidocalcisome-like vacuoles and prevents its toxicity.</title>
        <authorList>
            <person name="Gerasimaite R."/>
            <person name="Sharma S."/>
            <person name="Desfougeres Y."/>
            <person name="Schmidt A."/>
            <person name="Mayer A."/>
        </authorList>
    </citation>
    <scope>FUNCTION</scope>
</reference>
<reference key="17">
    <citation type="journal article" date="2016" name="J. Biol. Chem.">
        <title>Vtc5, a novel subunit of the vacuolar transporter chaperone complex, regulates polyphosphate synthesis and phosphate homeostasis in yeast.</title>
        <authorList>
            <person name="Desfougeres Y."/>
            <person name="Gerasimaite R.U."/>
            <person name="Jessen H.J."/>
            <person name="Mayer A."/>
        </authorList>
    </citation>
    <scope>INTERACTION WITH VTC5</scope>
</reference>
<reference key="18">
    <citation type="journal article" date="2016" name="Science">
        <title>Control of eukaryotic phosphate homeostasis by inositol polyphosphate sensor domains.</title>
        <authorList>
            <person name="Wild R."/>
            <person name="Gerasimaite R."/>
            <person name="Jung J.Y."/>
            <person name="Truffault V."/>
            <person name="Pavlovic I."/>
            <person name="Schmidt A."/>
            <person name="Saiardi A."/>
            <person name="Jessen H.J."/>
            <person name="Poirier Y."/>
            <person name="Hothorn M."/>
            <person name="Mayer A."/>
        </authorList>
    </citation>
    <scope>FUNCTION</scope>
    <scope>DOMAIN</scope>
</reference>
<reference key="19">
    <citation type="journal article" date="2017" name="ACS Chem. Biol.">
        <title>Inositol pyrophosphate specificity of the SPX-dependent polyphosphate polymerase VTC.</title>
        <authorList>
            <person name="Gerasimaite R."/>
            <person name="Pavlovic I."/>
            <person name="Capolicchio S."/>
            <person name="Hofer A."/>
            <person name="Schmidt A."/>
            <person name="Jessen H.J."/>
            <person name="Mayer A."/>
        </authorList>
    </citation>
    <scope>DOMAIN</scope>
</reference>
<comment type="function">
    <text evidence="5 6 10 11 12">Accessory subunit of the vacuolar transporter chaperone (VTC) complex. The VTC complex acts as a vacuolar polyphosphate polymerase that catalyzes the synthesis of inorganic polyphosphate (polyP) via transfer of phosphate from ATP to a growing polyP chain, releasing ADP. VTC exposes its catalytic domain VTC4 to the cytosol, where the growing polyP chain winds through a tunnel-shaped pocket, integrating cytoplasmic polymer synthesis with polyP membrane translocation (PubMed:19390046). The VTC complex carries 9 vacuolar transmembrane domains, which are likely to constitute the translocation channel into the organelle lumen (PubMed:19390046, PubMed:25315834). PolyP synthesis is tightly coupled to its transport into the vacuole lumen, in order to avoid otherwise toxic intermediates in the cytosol, and it depends on the proton gradient across the membrane, formed by V-ATPase (PubMed:25315834). The VTC complex also plays a role in vacuolar membrane fusion (PubMed:11102525, PubMed:11823419). Required for SEC18/NSF activity in SNARE priming, membrane binding of LMA1 and V(0) trans-complex formation (PubMed:11823419). Binds inositol hexakisphosphate (Ins6P) and similar inositol polyphosphates, such as 5-diphospho-inositol pentakisphosphate (5-InsP7); these are important intracellular signaling molecules. Inositol polyphosphate binding promotes vacuolar polyphosphate synthesis (PubMed:27080106).</text>
</comment>
<comment type="subunit">
    <text evidence="6 10 13">The VTC core complex is an integral membrane heterooligomer composed of the catalytic subunit VTC4 and the accessory subunits VTC1, VTC2 and VTC3. The complex exists in 2 different sub-complexes: VTC1-VTC2-VCT4 and VCT1-VTC3-VTC4. The VCT1-VTC3-VTC4 subcomplex is mostly found on the vacuolar membrane. The VTC1-VTC2-VCT4 subcomplex is observed in the cell periphery, probably ER and nuclear envelope, but localizes to the vacuole under phosphate starvation. Each subunit contains 3 transmembrane helices. VTC1 is a small membrane protein without hydrophilic domain. VTC2, VTC3 and VTC4 are related and have 2 hydrophilic domains that face the cytosol, an N-terminal SPX domain and the central core domain. The central core in VTC4 is the catalytic domain, with the essential catalytic lysine replaced by isoleucine and leucine in VTC2 and VTC3, respectively (PubMed:19390046). The core complex associates with the accessory subunit VTC5 (PubMed:27587415). The complex interacts with the v-SNARE NYV1 and with the V(0) subunit of V-ATPase VPH1 (PubMed:11823419).</text>
</comment>
<comment type="subcellular location">
    <subcellularLocation>
        <location evidence="7 10">Vacuole membrane</location>
        <topology evidence="7">Multi-pass membrane protein</topology>
    </subcellularLocation>
    <subcellularLocation>
        <location evidence="9 10">Cytoplasm</location>
        <location evidence="9 10">Cell cortex</location>
    </subcellularLocation>
    <subcellularLocation>
        <location evidence="9">Endoplasmic reticulum membrane</location>
        <topology evidence="7">Multi-pass membrane protein</topology>
    </subcellularLocation>
    <subcellularLocation>
        <location evidence="9">Cytoplasmic vesicle</location>
        <location evidence="9">Autophagosome membrane</location>
        <topology evidence="7">Multi-pass membrane protein</topology>
    </subcellularLocation>
</comment>
<comment type="induction">
    <text evidence="5">By low phosphate.</text>
</comment>
<comment type="domain">
    <text evidence="20 21">The SPX domain has very high affinity for inositol polyphosphates, such as myo-inositol hexakisphosphate and 5-diphospho-myo-inositol pentakisphosphate (5-InsP7), and moderate affinity for inorganic pyrophosphate. Its affinity for inorganic phosphate is 2 to 3 orders of magnitude lower (Probable). SPX domains may integrate inositol pyrophosphates (PP-InsP)-dependent signaling to adapt cytosolic phosphate concentrations to different metabolic situations (Probable).</text>
</comment>
<comment type="miscellaneous">
    <text evidence="8">Present with 2630 molecules/cell in log phase SD medium.</text>
</comment>
<comment type="similarity">
    <text evidence="18">Belongs to the VTC2/3 family.</text>
</comment>
<organism>
    <name type="scientific">Saccharomyces cerevisiae (strain ATCC 204508 / S288c)</name>
    <name type="common">Baker's yeast</name>
    <dbReference type="NCBI Taxonomy" id="559292"/>
    <lineage>
        <taxon>Eukaryota</taxon>
        <taxon>Fungi</taxon>
        <taxon>Dikarya</taxon>
        <taxon>Ascomycota</taxon>
        <taxon>Saccharomycotina</taxon>
        <taxon>Saccharomycetes</taxon>
        <taxon>Saccharomycetales</taxon>
        <taxon>Saccharomycetaceae</taxon>
        <taxon>Saccharomyces</taxon>
    </lineage>
</organism>
<feature type="chain" id="PRO_0000065936" description="Vacuolar transporter chaperone 3 complex subunit 3">
    <location>
        <begin position="1"/>
        <end position="835"/>
    </location>
</feature>
<feature type="topological domain" description="Cytoplasmic" evidence="7">
    <location>
        <begin position="1"/>
        <end position="709"/>
    </location>
</feature>
<feature type="transmembrane region" description="Helical" evidence="2">
    <location>
        <begin position="710"/>
        <end position="727"/>
    </location>
</feature>
<feature type="topological domain" description="Vacuolar" evidence="19">
    <location>
        <begin position="728"/>
        <end position="735"/>
    </location>
</feature>
<feature type="transmembrane region" description="Helical" evidence="2">
    <location>
        <begin position="736"/>
        <end position="756"/>
    </location>
</feature>
<feature type="topological domain" description="Cytoplasmic" evidence="19">
    <location>
        <begin position="757"/>
        <end position="778"/>
    </location>
</feature>
<feature type="transmembrane region" description="Helical" evidence="2">
    <location>
        <begin position="779"/>
        <end position="799"/>
    </location>
</feature>
<feature type="topological domain" description="Vacuolar" evidence="7">
    <location>
        <begin position="800"/>
        <end position="835"/>
    </location>
</feature>
<feature type="domain" description="SPX" evidence="3">
    <location>
        <begin position="1"/>
        <end position="145"/>
    </location>
</feature>
<feature type="region of interest" description="Important for inositol polyphosphate binding" evidence="20">
    <location>
        <begin position="126"/>
        <end position="133"/>
    </location>
</feature>
<feature type="region of interest" description="Disordered" evidence="4">
    <location>
        <begin position="564"/>
        <end position="610"/>
    </location>
</feature>
<feature type="region of interest" description="Disordered" evidence="4">
    <location>
        <begin position="616"/>
        <end position="635"/>
    </location>
</feature>
<feature type="coiled-coil region" evidence="2">
    <location>
        <begin position="385"/>
        <end position="413"/>
    </location>
</feature>
<feature type="compositionally biased region" description="Basic and acidic residues" evidence="4">
    <location>
        <begin position="564"/>
        <end position="586"/>
    </location>
</feature>
<feature type="compositionally biased region" description="Basic and acidic residues" evidence="4">
    <location>
        <begin position="597"/>
        <end position="610"/>
    </location>
</feature>
<feature type="compositionally biased region" description="Acidic residues" evidence="4">
    <location>
        <begin position="617"/>
        <end position="626"/>
    </location>
</feature>
<feature type="site" description="Important for inositol polyphosphate binding" evidence="1">
    <location>
        <position position="22"/>
    </location>
</feature>
<feature type="site" description="Important for inositol polyphosphate binding" evidence="1">
    <location>
        <position position="26"/>
    </location>
</feature>
<feature type="modified residue" description="Phosphoserine" evidence="23 25">
    <location>
        <position position="43"/>
    </location>
</feature>
<feature type="modified residue" description="Phosphoserine" evidence="25">
    <location>
        <position position="45"/>
    </location>
</feature>
<feature type="modified residue" description="Phosphoserine" evidence="25">
    <location>
        <position position="50"/>
    </location>
</feature>
<feature type="modified residue" description="Phosphothreonine" evidence="24">
    <location>
        <position position="183"/>
    </location>
</feature>
<feature type="modified residue" description="Phosphoserine" evidence="25">
    <location>
        <position position="195"/>
    </location>
</feature>
<feature type="modified residue" description="Phosphoserine" evidence="23 24 25">
    <location>
        <position position="198"/>
    </location>
</feature>
<feature type="modified residue" description="Phosphoserine" evidence="23 25">
    <location>
        <position position="270"/>
    </location>
</feature>
<feature type="modified residue" description="Phosphoserine" evidence="24 25">
    <location>
        <position position="274"/>
    </location>
</feature>
<feature type="modified residue" description="Phosphoserine" evidence="22">
    <location>
        <position position="589"/>
    </location>
</feature>
<feature type="modified residue" description="Phosphoserine" evidence="22 23">
    <location>
        <position position="592"/>
    </location>
</feature>
<feature type="modified residue" description="Phosphoserine" evidence="23 24 25">
    <location>
        <position position="621"/>
    </location>
</feature>
<feature type="modified residue" description="Phosphoserine" evidence="23 24 25">
    <location>
        <position position="622"/>
    </location>
</feature>
<feature type="helix" evidence="26">
    <location>
        <begin position="4"/>
        <end position="9"/>
    </location>
</feature>
<feature type="helix" evidence="26">
    <location>
        <begin position="13"/>
        <end position="18"/>
    </location>
</feature>
<feature type="helix" evidence="26">
    <location>
        <begin position="22"/>
        <end position="34"/>
    </location>
</feature>
<feature type="turn" evidence="26">
    <location>
        <begin position="35"/>
        <end position="38"/>
    </location>
</feature>
<feature type="helix" evidence="26">
    <location>
        <begin position="46"/>
        <end position="82"/>
    </location>
</feature>
<feature type="helix" evidence="26">
    <location>
        <begin position="88"/>
        <end position="92"/>
    </location>
</feature>
<feature type="helix" evidence="26">
    <location>
        <begin position="96"/>
        <end position="134"/>
    </location>
</feature>
<feature type="strand" evidence="27">
    <location>
        <begin position="136"/>
        <end position="138"/>
    </location>
</feature>
<feature type="helix" evidence="26">
    <location>
        <begin position="142"/>
        <end position="150"/>
    </location>
</feature>
<feature type="strand" evidence="27">
    <location>
        <begin position="152"/>
        <end position="154"/>
    </location>
</feature>
<feature type="strand" evidence="26">
    <location>
        <begin position="157"/>
        <end position="159"/>
    </location>
</feature>
<feature type="helix" evidence="26">
    <location>
        <begin position="162"/>
        <end position="177"/>
    </location>
</feature>
<feature type="strand" evidence="27">
    <location>
        <begin position="180"/>
        <end position="182"/>
    </location>
</feature>
<feature type="helix" evidence="27">
    <location>
        <begin position="188"/>
        <end position="194"/>
    </location>
</feature>
<feature type="strand" evidence="26">
    <location>
        <begin position="204"/>
        <end position="212"/>
    </location>
</feature>
<feature type="helix" evidence="26">
    <location>
        <begin position="214"/>
        <end position="225"/>
    </location>
</feature>
<feature type="strand" evidence="26">
    <location>
        <begin position="230"/>
        <end position="233"/>
    </location>
</feature>
<feature type="strand" evidence="26">
    <location>
        <begin position="296"/>
        <end position="302"/>
    </location>
</feature>
<feature type="helix" evidence="26">
    <location>
        <begin position="307"/>
        <end position="313"/>
    </location>
</feature>
<feature type="strand" evidence="26">
    <location>
        <begin position="320"/>
        <end position="328"/>
    </location>
</feature>
<feature type="helix" evidence="26">
    <location>
        <begin position="330"/>
        <end position="332"/>
    </location>
</feature>
<feature type="strand" evidence="26">
    <location>
        <begin position="336"/>
        <end position="343"/>
    </location>
</feature>
<feature type="strand" evidence="27">
    <location>
        <begin position="347"/>
        <end position="349"/>
    </location>
</feature>
<feature type="strand" evidence="26">
    <location>
        <begin position="354"/>
        <end position="361"/>
    </location>
</feature>
<feature type="turn" evidence="26">
    <location>
        <begin position="363"/>
        <end position="365"/>
    </location>
</feature>
<feature type="helix" evidence="26">
    <location>
        <begin position="366"/>
        <end position="370"/>
    </location>
</feature>
<feature type="helix" evidence="26">
    <location>
        <begin position="376"/>
        <end position="387"/>
    </location>
</feature>
<feature type="helix" evidence="26">
    <location>
        <begin position="392"/>
        <end position="412"/>
    </location>
</feature>
<feature type="strand" evidence="26">
    <location>
        <begin position="415"/>
        <end position="428"/>
    </location>
</feature>
<feature type="strand" evidence="26">
    <location>
        <begin position="434"/>
        <end position="447"/>
    </location>
</feature>
<feature type="strand" evidence="26">
    <location>
        <begin position="453"/>
        <end position="455"/>
    </location>
</feature>
<feature type="strand" evidence="26">
    <location>
        <begin position="462"/>
        <end position="464"/>
    </location>
</feature>
<feature type="strand" evidence="26">
    <location>
        <begin position="469"/>
        <end position="473"/>
    </location>
</feature>
<feature type="helix" evidence="26">
    <location>
        <begin position="475"/>
        <end position="478"/>
    </location>
</feature>
<feature type="strand" evidence="26">
    <location>
        <begin position="483"/>
        <end position="486"/>
    </location>
</feature>
<feature type="strand" evidence="26">
    <location>
        <begin position="489"/>
        <end position="498"/>
    </location>
</feature>
<feature type="strand" evidence="26">
    <location>
        <begin position="500"/>
        <end position="503"/>
    </location>
</feature>
<feature type="helix" evidence="26">
    <location>
        <begin position="508"/>
        <end position="514"/>
    </location>
</feature>
<feature type="strand" evidence="27">
    <location>
        <begin position="519"/>
        <end position="521"/>
    </location>
</feature>
<feature type="helix" evidence="26">
    <location>
        <begin position="527"/>
        <end position="536"/>
    </location>
</feature>
<feature type="turn" evidence="26">
    <location>
        <begin position="540"/>
        <end position="542"/>
    </location>
</feature>
<feature type="helix" evidence="26">
    <location>
        <begin position="550"/>
        <end position="552"/>
    </location>
</feature>
<feature type="strand" evidence="26">
    <location>
        <begin position="553"/>
        <end position="555"/>
    </location>
</feature>
<feature type="helix" evidence="26">
    <location>
        <begin position="562"/>
        <end position="564"/>
    </location>
</feature>
<feature type="turn" evidence="26">
    <location>
        <begin position="565"/>
        <end position="567"/>
    </location>
</feature>
<feature type="helix" evidence="26">
    <location>
        <begin position="568"/>
        <end position="588"/>
    </location>
</feature>
<feature type="helix" evidence="26">
    <location>
        <begin position="694"/>
        <end position="725"/>
    </location>
</feature>
<feature type="turn" evidence="26">
    <location>
        <begin position="726"/>
        <end position="730"/>
    </location>
</feature>
<feature type="strand" evidence="26">
    <location>
        <begin position="731"/>
        <end position="733"/>
    </location>
</feature>
<feature type="helix" evidence="26">
    <location>
        <begin position="734"/>
        <end position="767"/>
    </location>
</feature>
<feature type="helix" evidence="26">
    <location>
        <begin position="778"/>
        <end position="798"/>
    </location>
</feature>
<feature type="helix" evidence="26">
    <location>
        <begin position="801"/>
        <end position="803"/>
    </location>
</feature>
<feature type="strand" evidence="26">
    <location>
        <begin position="807"/>
        <end position="809"/>
    </location>
</feature>
<feature type="helix" evidence="27">
    <location>
        <begin position="823"/>
        <end position="833"/>
    </location>
</feature>
<dbReference type="EMBL" id="U36624">
    <property type="protein sequence ID" value="AAB68168.1"/>
    <property type="molecule type" value="Genomic_DNA"/>
</dbReference>
<dbReference type="EMBL" id="BK006949">
    <property type="protein sequence ID" value="DAA11409.1"/>
    <property type="molecule type" value="Genomic_DNA"/>
</dbReference>
<dbReference type="PIR" id="S63463">
    <property type="entry name" value="S63463"/>
</dbReference>
<dbReference type="RefSeq" id="NP_015306.1">
    <property type="nucleotide sequence ID" value="NM_001183833.1"/>
</dbReference>
<dbReference type="PDB" id="7YTJ">
    <property type="method" value="EM"/>
    <property type="resolution" value="3.00 A"/>
    <property type="chains" value="E=1-835"/>
</dbReference>
<dbReference type="PDB" id="8I6V">
    <property type="method" value="EM"/>
    <property type="resolution" value="3.06 A"/>
    <property type="chains" value="D=1-835"/>
</dbReference>
<dbReference type="PDBsum" id="7YTJ"/>
<dbReference type="PDBsum" id="8I6V"/>
<dbReference type="EMDB" id="EMD-34090"/>
<dbReference type="EMDB" id="EMD-35208"/>
<dbReference type="SMR" id="Q02725"/>
<dbReference type="BioGRID" id="36158">
    <property type="interactions" value="123"/>
</dbReference>
<dbReference type="ComplexPortal" id="CPX-784">
    <property type="entry name" value="Vacuolar transporter chaperone complex, VTC3 variant"/>
</dbReference>
<dbReference type="DIP" id="DIP-2000N"/>
<dbReference type="FunCoup" id="Q02725">
    <property type="interactions" value="116"/>
</dbReference>
<dbReference type="IntAct" id="Q02725">
    <property type="interactions" value="44"/>
</dbReference>
<dbReference type="MINT" id="Q02725"/>
<dbReference type="STRING" id="4932.YPL019C"/>
<dbReference type="TCDB" id="4.E.1.1.2">
    <property type="family name" value="the vacuolar (acidocalcisome) polyphosphate polymerase/channel (v-pppc) family"/>
</dbReference>
<dbReference type="CarbonylDB" id="Q02725"/>
<dbReference type="iPTMnet" id="Q02725"/>
<dbReference type="PaxDb" id="4932-YPL019C"/>
<dbReference type="PeptideAtlas" id="Q02725"/>
<dbReference type="EnsemblFungi" id="YPL019C_mRNA">
    <property type="protein sequence ID" value="YPL019C"/>
    <property type="gene ID" value="YPL019C"/>
</dbReference>
<dbReference type="GeneID" id="856088"/>
<dbReference type="KEGG" id="sce:YPL019C"/>
<dbReference type="AGR" id="SGD:S000005940"/>
<dbReference type="SGD" id="S000005940">
    <property type="gene designation" value="VTC3"/>
</dbReference>
<dbReference type="VEuPathDB" id="FungiDB:YPL019C"/>
<dbReference type="eggNOG" id="KOG1161">
    <property type="taxonomic scope" value="Eukaryota"/>
</dbReference>
<dbReference type="eggNOG" id="KOG4580">
    <property type="taxonomic scope" value="Eukaryota"/>
</dbReference>
<dbReference type="GeneTree" id="ENSGT00940000176481"/>
<dbReference type="HOGENOM" id="CLU_009308_2_0_1"/>
<dbReference type="InParanoid" id="Q02725"/>
<dbReference type="OMA" id="WCRLADE"/>
<dbReference type="OrthoDB" id="6493944at2759"/>
<dbReference type="BioCyc" id="YEAST:YPL019C-MONOMER"/>
<dbReference type="BioGRID-ORCS" id="856088">
    <property type="hits" value="0 hits in 10 CRISPR screens"/>
</dbReference>
<dbReference type="PRO" id="PR:Q02725"/>
<dbReference type="Proteomes" id="UP000002311">
    <property type="component" value="Chromosome XVI"/>
</dbReference>
<dbReference type="RNAct" id="Q02725">
    <property type="molecule type" value="protein"/>
</dbReference>
<dbReference type="GO" id="GO:0000421">
    <property type="term" value="C:autophagosome membrane"/>
    <property type="evidence" value="ECO:0000303"/>
    <property type="project" value="ComplexPortal"/>
</dbReference>
<dbReference type="GO" id="GO:0005938">
    <property type="term" value="C:cell cortex"/>
    <property type="evidence" value="ECO:0007669"/>
    <property type="project" value="UniProtKB-SubCell"/>
</dbReference>
<dbReference type="GO" id="GO:0031410">
    <property type="term" value="C:cytoplasmic vesicle"/>
    <property type="evidence" value="ECO:0007669"/>
    <property type="project" value="UniProtKB-KW"/>
</dbReference>
<dbReference type="GO" id="GO:0005783">
    <property type="term" value="C:endoplasmic reticulum"/>
    <property type="evidence" value="ECO:0000314"/>
    <property type="project" value="SGD"/>
</dbReference>
<dbReference type="GO" id="GO:0005789">
    <property type="term" value="C:endoplasmic reticulum membrane"/>
    <property type="evidence" value="ECO:0007669"/>
    <property type="project" value="UniProtKB-SubCell"/>
</dbReference>
<dbReference type="GO" id="GO:0000329">
    <property type="term" value="C:fungal-type vacuole membrane"/>
    <property type="evidence" value="ECO:0000314"/>
    <property type="project" value="SGD"/>
</dbReference>
<dbReference type="GO" id="GO:0033254">
    <property type="term" value="C:vacuolar transporter chaperone complex"/>
    <property type="evidence" value="ECO:0000353"/>
    <property type="project" value="SGD"/>
</dbReference>
<dbReference type="GO" id="GO:0005516">
    <property type="term" value="F:calmodulin binding"/>
    <property type="evidence" value="ECO:0000314"/>
    <property type="project" value="SGD"/>
</dbReference>
<dbReference type="GO" id="GO:0000822">
    <property type="term" value="F:inositol hexakisphosphate binding"/>
    <property type="evidence" value="ECO:0000314"/>
    <property type="project" value="UniProtKB"/>
</dbReference>
<dbReference type="GO" id="GO:0061736">
    <property type="term" value="P:engulfment of target by autophagosome"/>
    <property type="evidence" value="ECO:0000303"/>
    <property type="project" value="ComplexPortal"/>
</dbReference>
<dbReference type="GO" id="GO:0030643">
    <property type="term" value="P:intracellular phosphate ion homeostasis"/>
    <property type="evidence" value="ECO:0000315"/>
    <property type="project" value="UniProtKB"/>
</dbReference>
<dbReference type="GO" id="GO:0016237">
    <property type="term" value="P:microautophagy"/>
    <property type="evidence" value="ECO:0000314"/>
    <property type="project" value="SGD"/>
</dbReference>
<dbReference type="GO" id="GO:0006799">
    <property type="term" value="P:polyphosphate biosynthetic process"/>
    <property type="evidence" value="ECO:0000314"/>
    <property type="project" value="ComplexPortal"/>
</dbReference>
<dbReference type="GO" id="GO:0006797">
    <property type="term" value="P:polyphosphate metabolic process"/>
    <property type="evidence" value="ECO:0000315"/>
    <property type="project" value="SGD"/>
</dbReference>
<dbReference type="GO" id="GO:0007034">
    <property type="term" value="P:vacuolar transport"/>
    <property type="evidence" value="ECO:0000314"/>
    <property type="project" value="SGD"/>
</dbReference>
<dbReference type="GO" id="GO:0042144">
    <property type="term" value="P:vacuole fusion, non-autophagic"/>
    <property type="evidence" value="ECO:0000315"/>
    <property type="project" value="SGD"/>
</dbReference>
<dbReference type="CDD" id="cd07892">
    <property type="entry name" value="PolyPPase_VTC2-3_like"/>
    <property type="match status" value="1"/>
</dbReference>
<dbReference type="CDD" id="cd14480">
    <property type="entry name" value="SPX_VTC2_like"/>
    <property type="match status" value="1"/>
</dbReference>
<dbReference type="Gene3D" id="3.20.100.30">
    <property type="entry name" value="VTC, catalytic tunnel domain"/>
    <property type="match status" value="1"/>
</dbReference>
<dbReference type="InterPro" id="IPR003807">
    <property type="entry name" value="DUF202"/>
</dbReference>
<dbReference type="InterPro" id="IPR004331">
    <property type="entry name" value="SPX_dom"/>
</dbReference>
<dbReference type="InterPro" id="IPR051572">
    <property type="entry name" value="VTC_Complex_Subunit"/>
</dbReference>
<dbReference type="InterPro" id="IPR018966">
    <property type="entry name" value="VTC_domain"/>
</dbReference>
<dbReference type="InterPro" id="IPR042267">
    <property type="entry name" value="VTC_sf"/>
</dbReference>
<dbReference type="PANTHER" id="PTHR46140">
    <property type="entry name" value="VACUOLAR TRANSPORTER CHAPERONE 1-RELATED"/>
    <property type="match status" value="1"/>
</dbReference>
<dbReference type="PANTHER" id="PTHR46140:SF2">
    <property type="entry name" value="VACUOLAR TRANSPORTER CHAPERONE 3 COMPLEX SUBUNIT 3-RELATED"/>
    <property type="match status" value="1"/>
</dbReference>
<dbReference type="Pfam" id="PF02656">
    <property type="entry name" value="DUF202"/>
    <property type="match status" value="1"/>
</dbReference>
<dbReference type="Pfam" id="PF09359">
    <property type="entry name" value="VTC"/>
    <property type="match status" value="1"/>
</dbReference>
<dbReference type="PROSITE" id="PS51382">
    <property type="entry name" value="SPX"/>
    <property type="match status" value="1"/>
</dbReference>
<sequence>MLFGIKLANDVYPPWKDSYIDYERLKKLLKESVIHDGRSSVDSWSERNESDFVEALDKELEKVYTFQISKYNAVLRKLDDLEENTKSAEKIQKINSEQFKNTLEECLDEAQRLDNFDRLNFTGFIKIVKKHDKLHPNYPSVKSLLQVRLKELPFNNSEEYSPLLYRISYLYEFLRSNYDHPNTVSKSLASTSKLSHFSNLEDASFKSYKFWVHDDNIMEVKARILRHLPALVYASVPNENDDFVDNLESDVRVQPEARLNIGSKSNSLSSDGNSNQDVEIGKSKSVIFPQSYDPTITTLYFDNDFFDLYNNRLLKISGAPTLRLRWIGKLLDKPDIFLEKRTFTENTETGNSSFEEIRLQMKAKFINNFIFKNDPSYKNYLINQLRERGTQKEELEKLSRDFDNIQNFIVEEKLQPVLRATYNRTAFQIPGDQSIRVTIDSNIMYIREDSLDKNRPIRNPENWHRDDIDSNIPNPLRFLRAGEYSKFPYSVMEIKVINQDNSQMPNYEWIKDLTNSHLVNEVPKFSLYLQGVASLFGEDDKYVNILPFWLPDLETDIRKNPQEAYEEEKKTLQKQKSIHDKLDNMRRLSKISVPDGKTTERQGQKDQNTRHVIADLEDHESSDEEGTALPKKSAVKKGKKFKTNAAFLKILAGKNISENGNDPYSDDTDSASSFQLPPGVKKPVHLLKNAGPVKVEAKVWLANERTFNRWLSVTTLLSVLTFSIYNSVQKAEFPQLADLLAYVYFFLTLFCGVWAYRTYLKRLTLIKGRSGKHLDAPVGPILVAVVLIVTLVVNFSVAFKEAARRERGLVNVSSQPSLPRTLKPIQDFIFNLVGE</sequence>
<name>VTC3_YEAST</name>
<accession>Q02725</accession>
<accession>D6W3Z3</accession>
<evidence type="ECO:0000250" key="1">
    <source>
        <dbReference type="UniProtKB" id="P43585"/>
    </source>
</evidence>
<evidence type="ECO:0000255" key="2"/>
<evidence type="ECO:0000255" key="3">
    <source>
        <dbReference type="PROSITE-ProRule" id="PRU00714"/>
    </source>
</evidence>
<evidence type="ECO:0000256" key="4">
    <source>
        <dbReference type="SAM" id="MobiDB-lite"/>
    </source>
</evidence>
<evidence type="ECO:0000269" key="5">
    <source>
    </source>
</evidence>
<evidence type="ECO:0000269" key="6">
    <source>
    </source>
</evidence>
<evidence type="ECO:0000269" key="7">
    <source>
    </source>
</evidence>
<evidence type="ECO:0000269" key="8">
    <source>
    </source>
</evidence>
<evidence type="ECO:0000269" key="9">
    <source>
    </source>
</evidence>
<evidence type="ECO:0000269" key="10">
    <source>
    </source>
</evidence>
<evidence type="ECO:0000269" key="11">
    <source>
    </source>
</evidence>
<evidence type="ECO:0000269" key="12">
    <source>
    </source>
</evidence>
<evidence type="ECO:0000269" key="13">
    <source>
    </source>
</evidence>
<evidence type="ECO:0000303" key="14">
    <source>
    </source>
</evidence>
<evidence type="ECO:0000303" key="15">
    <source>
    </source>
</evidence>
<evidence type="ECO:0000303" key="16">
    <source>
    </source>
</evidence>
<evidence type="ECO:0000303" key="17">
    <source>
    </source>
</evidence>
<evidence type="ECO:0000305" key="18"/>
<evidence type="ECO:0000305" key="19">
    <source>
    </source>
</evidence>
<evidence type="ECO:0000305" key="20">
    <source>
    </source>
</evidence>
<evidence type="ECO:0000305" key="21">
    <source>
    </source>
</evidence>
<evidence type="ECO:0007744" key="22">
    <source>
    </source>
</evidence>
<evidence type="ECO:0007744" key="23">
    <source>
    </source>
</evidence>
<evidence type="ECO:0007744" key="24">
    <source>
    </source>
</evidence>
<evidence type="ECO:0007744" key="25">
    <source>
    </source>
</evidence>
<evidence type="ECO:0007829" key="26">
    <source>
        <dbReference type="PDB" id="7YTJ"/>
    </source>
</evidence>
<evidence type="ECO:0007829" key="27">
    <source>
        <dbReference type="PDB" id="8I6V"/>
    </source>
</evidence>
<keyword id="KW-0002">3D-structure</keyword>
<keyword id="KW-0175">Coiled coil</keyword>
<keyword id="KW-0963">Cytoplasm</keyword>
<keyword id="KW-0968">Cytoplasmic vesicle</keyword>
<keyword id="KW-0903">Direct protein sequencing</keyword>
<keyword id="KW-0256">Endoplasmic reticulum</keyword>
<keyword id="KW-0472">Membrane</keyword>
<keyword id="KW-0597">Phosphoprotein</keyword>
<keyword id="KW-1185">Reference proteome</keyword>
<keyword id="KW-0812">Transmembrane</keyword>
<keyword id="KW-1133">Transmembrane helix</keyword>
<keyword id="KW-0926">Vacuole</keyword>
<protein>
    <recommendedName>
        <fullName evidence="18">Vacuolar transporter chaperone 3 complex subunit 3</fullName>
    </recommendedName>
    <alternativeName>
        <fullName evidence="15">Phosphate metabolism protein 2</fullName>
    </alternativeName>
    <alternativeName>
        <fullName evidence="17">SPX-dependent polyphosphate polymerase VTC subunit 3</fullName>
    </alternativeName>
    <alternativeName>
        <fullName evidence="16">Vacuolar membrane polyphosphate polymerase accessory subunit 3</fullName>
        <shortName>PolyP polymerase</shortName>
    </alternativeName>
</protein>
<gene>
    <name evidence="14" type="primary">VTC3</name>
    <name evidence="15" type="synonym">PHM2</name>
    <name type="ordered locus">YPL019C</name>
</gene>
<proteinExistence type="evidence at protein level"/>